<organism>
    <name type="scientific">Theileria parva</name>
    <name type="common">East coast fever infection agent</name>
    <dbReference type="NCBI Taxonomy" id="5875"/>
    <lineage>
        <taxon>Eukaryota</taxon>
        <taxon>Sar</taxon>
        <taxon>Alveolata</taxon>
        <taxon>Apicomplexa</taxon>
        <taxon>Aconoidasida</taxon>
        <taxon>Piroplasmida</taxon>
        <taxon>Theileriidae</taxon>
        <taxon>Theileria</taxon>
    </lineage>
</organism>
<sequence>MSETKCGAKVTFKIVLASDANQPYKVLSVPEQAPFSAVIKFAAEEFRLNPATCAIITNDGVGINPTQTAGGVFLKYGSNLRLIPRDRVGFYY</sequence>
<keyword id="KW-1017">Isopeptide bond</keyword>
<keyword id="KW-1185">Reference proteome</keyword>
<keyword id="KW-0833">Ubl conjugation pathway</keyword>
<accession>Q4N927</accession>
<gene>
    <name type="ordered locus">TP01_0287</name>
</gene>
<dbReference type="EMBL" id="AAGK01000001">
    <property type="protein sequence ID" value="EAN33531.1"/>
    <property type="molecule type" value="Genomic_DNA"/>
</dbReference>
<dbReference type="SMR" id="Q4N927"/>
<dbReference type="STRING" id="5875.Q4N927"/>
<dbReference type="EnsemblProtists" id="EAN33531">
    <property type="protein sequence ID" value="EAN33531"/>
    <property type="gene ID" value="TP01_0287"/>
</dbReference>
<dbReference type="GeneID" id="3502727"/>
<dbReference type="KEGG" id="tpv:TP01_0287"/>
<dbReference type="VEuPathDB" id="PiroplasmaDB:TpMuguga_01g00287"/>
<dbReference type="eggNOG" id="KOG3483">
    <property type="taxonomic scope" value="Eukaryota"/>
</dbReference>
<dbReference type="InParanoid" id="Q4N927"/>
<dbReference type="OMA" id="MEHAVGK"/>
<dbReference type="Proteomes" id="UP000001949">
    <property type="component" value="Unassembled WGS sequence"/>
</dbReference>
<dbReference type="GO" id="GO:0005737">
    <property type="term" value="C:cytoplasm"/>
    <property type="evidence" value="ECO:0007669"/>
    <property type="project" value="TreeGrafter"/>
</dbReference>
<dbReference type="GO" id="GO:0005634">
    <property type="term" value="C:nucleus"/>
    <property type="evidence" value="ECO:0007669"/>
    <property type="project" value="TreeGrafter"/>
</dbReference>
<dbReference type="GO" id="GO:1990592">
    <property type="term" value="P:protein K69-linked ufmylation"/>
    <property type="evidence" value="ECO:0007669"/>
    <property type="project" value="TreeGrafter"/>
</dbReference>
<dbReference type="CDD" id="cd01766">
    <property type="entry name" value="Ubl_UFM1"/>
    <property type="match status" value="1"/>
</dbReference>
<dbReference type="FunFam" id="3.10.20.90:FF:000044">
    <property type="entry name" value="Ubiquitin-fold modifier 1"/>
    <property type="match status" value="1"/>
</dbReference>
<dbReference type="Gene3D" id="3.10.20.90">
    <property type="entry name" value="Phosphatidylinositol 3-kinase Catalytic Subunit, Chain A, domain 1"/>
    <property type="match status" value="1"/>
</dbReference>
<dbReference type="InterPro" id="IPR029071">
    <property type="entry name" value="Ubiquitin-like_domsf"/>
</dbReference>
<dbReference type="InterPro" id="IPR005375">
    <property type="entry name" value="UFM1"/>
</dbReference>
<dbReference type="PANTHER" id="PTHR15825">
    <property type="entry name" value="UBIQUITIN-FOLD MODIFIER 1"/>
    <property type="match status" value="1"/>
</dbReference>
<dbReference type="PANTHER" id="PTHR15825:SF0">
    <property type="entry name" value="UBIQUITIN-FOLD MODIFIER 1"/>
    <property type="match status" value="1"/>
</dbReference>
<dbReference type="Pfam" id="PF03671">
    <property type="entry name" value="Ufm1"/>
    <property type="match status" value="1"/>
</dbReference>
<dbReference type="PIRSF" id="PIRSF038027">
    <property type="entry name" value="Ubiquitin-like_Ufm1"/>
    <property type="match status" value="1"/>
</dbReference>
<dbReference type="SUPFAM" id="SSF54236">
    <property type="entry name" value="Ubiquitin-like"/>
    <property type="match status" value="1"/>
</dbReference>
<proteinExistence type="inferred from homology"/>
<name>UFM1_THEPA</name>
<evidence type="ECO:0000250" key="1"/>
<evidence type="ECO:0000255" key="2"/>
<evidence type="ECO:0000305" key="3"/>
<protein>
    <recommendedName>
        <fullName>Ubiquitin-fold modifier 1</fullName>
    </recommendedName>
</protein>
<reference key="1">
    <citation type="journal article" date="2005" name="Science">
        <title>Genome sequence of Theileria parva, a bovine pathogen that transforms lymphocytes.</title>
        <authorList>
            <person name="Gardner M.J."/>
            <person name="Bishop R."/>
            <person name="Shah T."/>
            <person name="de Villiers E.P."/>
            <person name="Carlton J.M."/>
            <person name="Hall N."/>
            <person name="Ren Q."/>
            <person name="Paulsen I.T."/>
            <person name="Pain A."/>
            <person name="Berriman M."/>
            <person name="Wilson R.J.M."/>
            <person name="Sato S."/>
            <person name="Ralph S.A."/>
            <person name="Mann D.J."/>
            <person name="Xiong Z."/>
            <person name="Shallom S.J."/>
            <person name="Weidman J."/>
            <person name="Jiang L."/>
            <person name="Lynn J."/>
            <person name="Weaver B."/>
            <person name="Shoaibi A."/>
            <person name="Domingo A.R."/>
            <person name="Wasawo D."/>
            <person name="Crabtree J."/>
            <person name="Wortman J.R."/>
            <person name="Haas B."/>
            <person name="Angiuoli S.V."/>
            <person name="Creasy T.H."/>
            <person name="Lu C."/>
            <person name="Suh B."/>
            <person name="Silva J.C."/>
            <person name="Utterback T.R."/>
            <person name="Feldblyum T.V."/>
            <person name="Pertea M."/>
            <person name="Allen J."/>
            <person name="Nierman W.C."/>
            <person name="Taracha E.L.N."/>
            <person name="Salzberg S.L."/>
            <person name="White O.R."/>
            <person name="Fitzhugh H.A."/>
            <person name="Morzaria S."/>
            <person name="Venter J.C."/>
            <person name="Fraser C.M."/>
            <person name="Nene V."/>
        </authorList>
    </citation>
    <scope>NUCLEOTIDE SEQUENCE [LARGE SCALE GENOMIC DNA]</scope>
    <source>
        <strain>Muguga</strain>
    </source>
</reference>
<comment type="function">
    <text evidence="1">Ubiquitin-like modifier protein which binds to a number of as yet unidentified target proteins.</text>
</comment>
<comment type="similarity">
    <text evidence="3">Belongs to the UFM1 family.</text>
</comment>
<feature type="chain" id="PRO_0000250566" description="Ubiquitin-fold modifier 1">
    <location>
        <begin position="1"/>
        <end position="89"/>
    </location>
</feature>
<feature type="propeptide" id="PRO_0000250567" description="Removed in mature form" evidence="1">
    <location>
        <begin position="90"/>
        <end position="92"/>
    </location>
</feature>
<feature type="cross-link" description="Glycyl lysine isopeptide (Gly-Lys) (interchain with K-? in acceptor proteins)" evidence="2">
    <location>
        <position position="89"/>
    </location>
</feature>